<comment type="function">
    <text evidence="5">Snake venom oligomeric phospholipase A2 that has potent presynaptic neurotoxicity. Chain D is not itself neurotoxic, but it is essential for the neurotoxicity of textilotoxin. Chain D possesses a very low phospholipase activity.</text>
</comment>
<comment type="subunit">
    <text evidence="4 7">Heterohexamer. 2 forms exist: 2 A or 2 B chains, 2 C chains and 2 covalently-linked D chains, and 1 A or 1 B, 1 C, 2 covalently-linked D chains and 2 differentially glycosylated covalently-linked D chains. Textilotoxin was originally described as pentameric (PubMed:8431471).</text>
</comment>
<comment type="subcellular location">
    <subcellularLocation>
        <location>Secreted</location>
    </subcellularLocation>
</comment>
<comment type="tissue specificity">
    <text>Expressed by the venom gland.</text>
</comment>
<comment type="toxic dose">
    <text evidence="7">Oligomer: LD(50) is 1 ug/kg by intraperitoneal injection into mice.</text>
</comment>
<comment type="similarity">
    <text evidence="8">Belongs to the phospholipase A2 family. Group I subfamily. D49 sub-subfamily.</text>
</comment>
<protein>
    <recommendedName>
        <fullName>Acidic phospholipase A2 homolog textilotoxin D chain</fullName>
        <shortName>svPLA2 homolog</shortName>
    </recommendedName>
</protein>
<name>PA2HD_PSETE</name>
<organism>
    <name type="scientific">Pseudonaja textilis</name>
    <name type="common">Eastern brown snake</name>
    <dbReference type="NCBI Taxonomy" id="8673"/>
    <lineage>
        <taxon>Eukaryota</taxon>
        <taxon>Metazoa</taxon>
        <taxon>Chordata</taxon>
        <taxon>Craniata</taxon>
        <taxon>Vertebrata</taxon>
        <taxon>Euteleostomi</taxon>
        <taxon>Lepidosauria</taxon>
        <taxon>Squamata</taxon>
        <taxon>Bifurcata</taxon>
        <taxon>Unidentata</taxon>
        <taxon>Episquamata</taxon>
        <taxon>Toxicofera</taxon>
        <taxon>Serpentes</taxon>
        <taxon>Colubroidea</taxon>
        <taxon>Elapidae</taxon>
        <taxon>Hydrophiinae</taxon>
        <taxon>Pseudonaja</taxon>
    </lineage>
</organism>
<feature type="signal peptide" evidence="3 5 6">
    <location>
        <begin position="1"/>
        <end position="19"/>
    </location>
</feature>
<feature type="chain" id="PRO_0000161697" description="Acidic phospholipase A2 homolog textilotoxin D chain">
    <location>
        <begin position="20"/>
        <end position="152"/>
    </location>
</feature>
<feature type="glycosylation site" description="N-linked (GlcNAc...) asparagine" evidence="7">
    <location>
        <position position="112"/>
    </location>
</feature>
<feature type="disulfide bond" evidence="1">
    <location>
        <begin position="38"/>
        <end position="104"/>
    </location>
</feature>
<feature type="disulfide bond" description="Interchain" evidence="2">
    <location>
        <position position="42"/>
    </location>
</feature>
<feature type="disulfide bond" evidence="1">
    <location>
        <begin position="54"/>
        <end position="151"/>
    </location>
</feature>
<feature type="disulfide bond" evidence="1">
    <location>
        <begin position="56"/>
        <end position="72"/>
    </location>
</feature>
<feature type="disulfide bond" evidence="1">
    <location>
        <begin position="71"/>
        <end position="132"/>
    </location>
</feature>
<feature type="disulfide bond" evidence="1">
    <location>
        <begin position="78"/>
        <end position="125"/>
    </location>
</feature>
<feature type="disulfide bond" evidence="1">
    <location>
        <begin position="88"/>
        <end position="118"/>
    </location>
</feature>
<feature type="disulfide bond" evidence="1">
    <location>
        <begin position="111"/>
        <end position="123"/>
    </location>
</feature>
<feature type="sequence conflict" description="In Ref. 4; AA sequence." evidence="8" ref="4">
    <original>M</original>
    <variation>N</variation>
    <location>
        <position position="30"/>
    </location>
</feature>
<feature type="sequence conflict" description="In Ref. 3; AA sequence." evidence="8" ref="3">
    <original>C</original>
    <variation>N</variation>
    <location>
        <position position="42"/>
    </location>
</feature>
<feature type="sequence conflict" description="In Ref. 3; AA sequence." evidence="8" ref="3">
    <original>D</original>
    <variation>N</variation>
    <location>
        <position position="51"/>
    </location>
</feature>
<feature type="sequence conflict" description="In Ref. 1; AAZ22645." evidence="8" ref="1">
    <original>I</original>
    <variation>T</variation>
    <location>
        <position position="145"/>
    </location>
</feature>
<keyword id="KW-0903">Direct protein sequencing</keyword>
<keyword id="KW-1015">Disulfide bond</keyword>
<keyword id="KW-0325">Glycoprotein</keyword>
<keyword id="KW-0528">Neurotoxin</keyword>
<keyword id="KW-0638">Presynaptic neurotoxin</keyword>
<keyword id="KW-1185">Reference proteome</keyword>
<keyword id="KW-0964">Secreted</keyword>
<keyword id="KW-0732">Signal</keyword>
<keyword id="KW-0800">Toxin</keyword>
<accession>P23028</accession>
<accession>Q45Z39</accession>
<accession>Q45Z40</accession>
<sequence>MHPAHLLVLLGVCVSLLGAASIPRPSLNIMLFGNMIQCTIPCEQSWLGYLDYGCYCGSGSSGIPVDDVDKCCKTHDECYYKAGQIPGCSVQPNEVFNVDYSYECNEGQLTCNESNNECEMAVCNCDRAAAICFARFPYNKNYWSINTEIHCR</sequence>
<proteinExistence type="evidence at protein level"/>
<reference key="1">
    <citation type="journal article" date="2005" name="Cell. Mol. Life Sci.">
        <title>Identification and analysis of venom gland-specific genes from the coastal taipan (Oxyuranus scutellatus) and related species.</title>
        <authorList>
            <person name="St Pierre L."/>
            <person name="Woods R."/>
            <person name="Earl S.T.H."/>
            <person name="Masci P.P."/>
            <person name="Lavin M.F."/>
        </authorList>
    </citation>
    <scope>NUCLEOTIDE SEQUENCE [MRNA]</scope>
    <source>
        <tissue>Venom gland</tissue>
    </source>
</reference>
<reference key="2">
    <citation type="journal article" date="1991" name="Biochim. Biophys. Acta">
        <title>Studies on the subunit structure of textilotoxin, a potent presynaptic neurotoxin from the venom of the Australian common brown snake (Pseudonaja textilis). 2. The amino acid sequence and toxicity studies of subunit D.</title>
        <authorList>
            <person name="Pearson J.A."/>
            <person name="Tyler M.I."/>
            <person name="Retson K.V."/>
            <person name="Howden M.E.H."/>
        </authorList>
    </citation>
    <scope>PROTEIN SEQUENCE OF 20-152</scope>
    <scope>FUNCTION</scope>
    <source>
        <tissue>Venom</tissue>
    </source>
</reference>
<reference key="3">
    <citation type="journal article" date="1987" name="Biochim. Biophys. Acta">
        <title>Studies on the subunit structure of textilotoxin, a potent neurotoxin from the venom of the Australian common brown snake (Pseudonaja textilis).</title>
        <authorList>
            <person name="Tyler M.I."/>
            <person name="Barnett D."/>
            <person name="Nicholson P."/>
            <person name="Spence I."/>
            <person name="Howden M.E.H."/>
        </authorList>
    </citation>
    <scope>PROTEIN SEQUENCE OF 20-53</scope>
    <source>
        <tissue>Venom</tissue>
    </source>
</reference>
<reference key="4">
    <citation type="journal article" date="2006" name="Mol. Cell. Proteomics">
        <title>Molecular diversity in venom from the Australian Brown snake, Pseudonaja textilis.</title>
        <authorList>
            <person name="Birrell G.W."/>
            <person name="Earl S."/>
            <person name="Masci P.P."/>
            <person name="de Jersey J."/>
            <person name="Wallis T.P."/>
            <person name="Gorman J.J."/>
            <person name="Lavin M.F."/>
        </authorList>
    </citation>
    <scope>PROTEIN SEQUENCE OF 20-33</scope>
    <scope>IDENTIFICATION BY MASS SPECTROMETRY</scope>
    <source>
        <tissue>Venom</tissue>
    </source>
</reference>
<reference key="5">
    <citation type="journal article" date="1993" name="Biochim. Biophys. Acta">
        <title>Studies on the subunit structure of textilotoxin, a potent presynaptic neurotoxin from the venom of the Australian common brown snake (Pseudonaja textilis). 3. The complete amino-acid sequences of all the subunits.</title>
        <authorList>
            <person name="Pearson J.A."/>
            <person name="Tyler M.I."/>
            <person name="Retson K.V."/>
            <person name="Howden M.E.H."/>
        </authorList>
    </citation>
    <scope>TOXIC DOSE</scope>
    <scope>GLYCOSYLATION</scope>
    <source>
        <tissue>Venom</tissue>
    </source>
</reference>
<reference key="6">
    <citation type="journal article" date="2009" name="Proteins">
        <title>The major toxin from the Australian common brown snake is a hexamer with unusual gas-phase dissociation properties.</title>
        <authorList>
            <person name="Aquilina J.A."/>
        </authorList>
    </citation>
    <scope>SUBUNIT</scope>
    <scope>IDENTIFICATION BY MASS SPECTROMETRY</scope>
    <source>
        <tissue>Venom</tissue>
    </source>
</reference>
<dbReference type="EMBL" id="DQ085826">
    <property type="protein sequence ID" value="AAZ22644.1"/>
    <property type="molecule type" value="mRNA"/>
</dbReference>
<dbReference type="EMBL" id="DQ085827">
    <property type="protein sequence ID" value="AAZ22645.1"/>
    <property type="molecule type" value="mRNA"/>
</dbReference>
<dbReference type="PIR" id="S14728">
    <property type="entry name" value="S14728"/>
</dbReference>
<dbReference type="SMR" id="P23028"/>
<dbReference type="iPTMnet" id="P23028"/>
<dbReference type="Proteomes" id="UP000472273">
    <property type="component" value="Unplaced"/>
</dbReference>
<dbReference type="GO" id="GO:0005576">
    <property type="term" value="C:extracellular region"/>
    <property type="evidence" value="ECO:0007669"/>
    <property type="project" value="UniProtKB-SubCell"/>
</dbReference>
<dbReference type="GO" id="GO:0005509">
    <property type="term" value="F:calcium ion binding"/>
    <property type="evidence" value="ECO:0007669"/>
    <property type="project" value="InterPro"/>
</dbReference>
<dbReference type="GO" id="GO:0047498">
    <property type="term" value="F:calcium-dependent phospholipase A2 activity"/>
    <property type="evidence" value="ECO:0007669"/>
    <property type="project" value="TreeGrafter"/>
</dbReference>
<dbReference type="GO" id="GO:0005543">
    <property type="term" value="F:phospholipid binding"/>
    <property type="evidence" value="ECO:0007669"/>
    <property type="project" value="TreeGrafter"/>
</dbReference>
<dbReference type="GO" id="GO:0090729">
    <property type="term" value="F:toxin activity"/>
    <property type="evidence" value="ECO:0007669"/>
    <property type="project" value="UniProtKB-KW"/>
</dbReference>
<dbReference type="GO" id="GO:0050482">
    <property type="term" value="P:arachidonate secretion"/>
    <property type="evidence" value="ECO:0007669"/>
    <property type="project" value="InterPro"/>
</dbReference>
<dbReference type="GO" id="GO:0016042">
    <property type="term" value="P:lipid catabolic process"/>
    <property type="evidence" value="ECO:0007669"/>
    <property type="project" value="InterPro"/>
</dbReference>
<dbReference type="GO" id="GO:0006644">
    <property type="term" value="P:phospholipid metabolic process"/>
    <property type="evidence" value="ECO:0007669"/>
    <property type="project" value="InterPro"/>
</dbReference>
<dbReference type="CDD" id="cd00125">
    <property type="entry name" value="PLA2c"/>
    <property type="match status" value="1"/>
</dbReference>
<dbReference type="FunFam" id="1.20.90.10:FF:000007">
    <property type="entry name" value="Acidic phospholipase A2"/>
    <property type="match status" value="1"/>
</dbReference>
<dbReference type="Gene3D" id="1.20.90.10">
    <property type="entry name" value="Phospholipase A2 domain"/>
    <property type="match status" value="1"/>
</dbReference>
<dbReference type="InterPro" id="IPR001211">
    <property type="entry name" value="PLipase_A2"/>
</dbReference>
<dbReference type="InterPro" id="IPR033112">
    <property type="entry name" value="PLipase_A2_Asp_AS"/>
</dbReference>
<dbReference type="InterPro" id="IPR016090">
    <property type="entry name" value="PLipase_A2_dom"/>
</dbReference>
<dbReference type="InterPro" id="IPR036444">
    <property type="entry name" value="PLipase_A2_dom_sf"/>
</dbReference>
<dbReference type="InterPro" id="IPR033113">
    <property type="entry name" value="PLipase_A2_His_AS"/>
</dbReference>
<dbReference type="PANTHER" id="PTHR11716:SF94">
    <property type="entry name" value="PHOSPHOLIPASE A2"/>
    <property type="match status" value="1"/>
</dbReference>
<dbReference type="PANTHER" id="PTHR11716">
    <property type="entry name" value="PHOSPHOLIPASE A2 FAMILY MEMBER"/>
    <property type="match status" value="1"/>
</dbReference>
<dbReference type="Pfam" id="PF00068">
    <property type="entry name" value="Phospholip_A2_1"/>
    <property type="match status" value="1"/>
</dbReference>
<dbReference type="PRINTS" id="PR00389">
    <property type="entry name" value="PHPHLIPASEA2"/>
</dbReference>
<dbReference type="SMART" id="SM00085">
    <property type="entry name" value="PA2c"/>
    <property type="match status" value="1"/>
</dbReference>
<dbReference type="SUPFAM" id="SSF48619">
    <property type="entry name" value="Phospholipase A2, PLA2"/>
    <property type="match status" value="1"/>
</dbReference>
<dbReference type="PROSITE" id="PS00119">
    <property type="entry name" value="PA2_ASP"/>
    <property type="match status" value="1"/>
</dbReference>
<dbReference type="PROSITE" id="PS00118">
    <property type="entry name" value="PA2_HIS"/>
    <property type="match status" value="1"/>
</dbReference>
<evidence type="ECO:0000250" key="1"/>
<evidence type="ECO:0000255" key="2"/>
<evidence type="ECO:0000269" key="3">
    <source>
    </source>
</evidence>
<evidence type="ECO:0000269" key="4">
    <source>
    </source>
</evidence>
<evidence type="ECO:0000269" key="5">
    <source>
    </source>
</evidence>
<evidence type="ECO:0000269" key="6">
    <source>
    </source>
</evidence>
<evidence type="ECO:0000269" key="7">
    <source>
    </source>
</evidence>
<evidence type="ECO:0000305" key="8"/>